<comment type="function">
    <text evidence="1">Catalyzes the base-exchange of a guanine (G) residue with the queuine precursor 7-aminomethyl-7-deazaguanine (PreQ1) at position 34 (anticodon wobble position) in tRNAs with GU(N) anticodons (tRNA-Asp, -Asn, -His and -Tyr). Catalysis occurs through a double-displacement mechanism. The nucleophile active site attacks the C1' of nucleotide 34 to detach the guanine base from the RNA, forming a covalent enzyme-RNA intermediate. The proton acceptor active site deprotonates the incoming PreQ1, allowing a nucleophilic attack on the C1' of the ribose to form the product. After dissociation, two additional enzymatic reactions on the tRNA convert PreQ1 to queuine (Q), resulting in the hypermodified nucleoside queuosine (7-(((4,5-cis-dihydroxy-2-cyclopenten-1-yl)amino)methyl)-7-deazaguanosine).</text>
</comment>
<comment type="catalytic activity">
    <reaction evidence="1">
        <text>7-aminomethyl-7-carbaguanine + guanosine(34) in tRNA = 7-aminomethyl-7-carbaguanosine(34) in tRNA + guanine</text>
        <dbReference type="Rhea" id="RHEA:24104"/>
        <dbReference type="Rhea" id="RHEA-COMP:10341"/>
        <dbReference type="Rhea" id="RHEA-COMP:10342"/>
        <dbReference type="ChEBI" id="CHEBI:16235"/>
        <dbReference type="ChEBI" id="CHEBI:58703"/>
        <dbReference type="ChEBI" id="CHEBI:74269"/>
        <dbReference type="ChEBI" id="CHEBI:82833"/>
        <dbReference type="EC" id="2.4.2.29"/>
    </reaction>
</comment>
<comment type="cofactor">
    <cofactor evidence="1">
        <name>Zn(2+)</name>
        <dbReference type="ChEBI" id="CHEBI:29105"/>
    </cofactor>
    <text evidence="1">Binds 1 zinc ion per subunit.</text>
</comment>
<comment type="pathway">
    <text evidence="1">tRNA modification; tRNA-queuosine biosynthesis.</text>
</comment>
<comment type="subunit">
    <text evidence="1">Homodimer. Within each dimer, one monomer is responsible for RNA recognition and catalysis, while the other monomer binds to the replacement base PreQ1.</text>
</comment>
<comment type="similarity">
    <text evidence="1">Belongs to the queuine tRNA-ribosyltransferase family.</text>
</comment>
<reference key="1">
    <citation type="journal article" date="2003" name="Mol. Microbiol.">
        <title>Genome-based analysis of virulence genes in a non-biofilm-forming Staphylococcus epidermidis strain (ATCC 12228).</title>
        <authorList>
            <person name="Zhang Y.-Q."/>
            <person name="Ren S.-X."/>
            <person name="Li H.-L."/>
            <person name="Wang Y.-X."/>
            <person name="Fu G."/>
            <person name="Yang J."/>
            <person name="Qin Z.-Q."/>
            <person name="Miao Y.-G."/>
            <person name="Wang W.-Y."/>
            <person name="Chen R.-S."/>
            <person name="Shen Y."/>
            <person name="Chen Z."/>
            <person name="Yuan Z.-H."/>
            <person name="Zhao G.-P."/>
            <person name="Qu D."/>
            <person name="Danchin A."/>
            <person name="Wen Y.-M."/>
        </authorList>
    </citation>
    <scope>NUCLEOTIDE SEQUENCE [LARGE SCALE GENOMIC DNA]</scope>
    <source>
        <strain>ATCC 12228 / FDA PCI 1200</strain>
    </source>
</reference>
<protein>
    <recommendedName>
        <fullName evidence="1">Queuine tRNA-ribosyltransferase</fullName>
        <ecNumber evidence="1">2.4.2.29</ecNumber>
    </recommendedName>
    <alternativeName>
        <fullName evidence="1">Guanine insertion enzyme</fullName>
    </alternativeName>
    <alternativeName>
        <fullName evidence="1">tRNA-guanine transglycosylase</fullName>
    </alternativeName>
</protein>
<accession>Q8CML7</accession>
<keyword id="KW-0328">Glycosyltransferase</keyword>
<keyword id="KW-0479">Metal-binding</keyword>
<keyword id="KW-0671">Queuosine biosynthesis</keyword>
<keyword id="KW-0808">Transferase</keyword>
<keyword id="KW-0819">tRNA processing</keyword>
<keyword id="KW-0862">Zinc</keyword>
<dbReference type="EC" id="2.4.2.29" evidence="1"/>
<dbReference type="EMBL" id="AE015929">
    <property type="protein sequence ID" value="AAO04921.1"/>
    <property type="molecule type" value="Genomic_DNA"/>
</dbReference>
<dbReference type="RefSeq" id="NP_764877.1">
    <property type="nucleotide sequence ID" value="NC_004461.1"/>
</dbReference>
<dbReference type="RefSeq" id="WP_001830840.1">
    <property type="nucleotide sequence ID" value="NZ_WBME01000016.1"/>
</dbReference>
<dbReference type="SMR" id="Q8CML7"/>
<dbReference type="GeneID" id="50018563"/>
<dbReference type="KEGG" id="sep:SE_1322"/>
<dbReference type="PATRIC" id="fig|176280.10.peg.1291"/>
<dbReference type="eggNOG" id="COG0343">
    <property type="taxonomic scope" value="Bacteria"/>
</dbReference>
<dbReference type="HOGENOM" id="CLU_022060_0_1_9"/>
<dbReference type="OrthoDB" id="9805417at2"/>
<dbReference type="UniPathway" id="UPA00392"/>
<dbReference type="Proteomes" id="UP000001411">
    <property type="component" value="Chromosome"/>
</dbReference>
<dbReference type="GO" id="GO:0005829">
    <property type="term" value="C:cytosol"/>
    <property type="evidence" value="ECO:0007669"/>
    <property type="project" value="TreeGrafter"/>
</dbReference>
<dbReference type="GO" id="GO:0046872">
    <property type="term" value="F:metal ion binding"/>
    <property type="evidence" value="ECO:0007669"/>
    <property type="project" value="UniProtKB-KW"/>
</dbReference>
<dbReference type="GO" id="GO:0008479">
    <property type="term" value="F:tRNA-guanosine(34) queuine transglycosylase activity"/>
    <property type="evidence" value="ECO:0007669"/>
    <property type="project" value="UniProtKB-UniRule"/>
</dbReference>
<dbReference type="GO" id="GO:0008616">
    <property type="term" value="P:queuosine biosynthetic process"/>
    <property type="evidence" value="ECO:0007669"/>
    <property type="project" value="UniProtKB-UniRule"/>
</dbReference>
<dbReference type="GO" id="GO:0002099">
    <property type="term" value="P:tRNA wobble guanine modification"/>
    <property type="evidence" value="ECO:0007669"/>
    <property type="project" value="TreeGrafter"/>
</dbReference>
<dbReference type="GO" id="GO:0101030">
    <property type="term" value="P:tRNA-guanine transglycosylation"/>
    <property type="evidence" value="ECO:0007669"/>
    <property type="project" value="InterPro"/>
</dbReference>
<dbReference type="FunFam" id="3.20.20.105:FF:000001">
    <property type="entry name" value="Queuine tRNA-ribosyltransferase"/>
    <property type="match status" value="1"/>
</dbReference>
<dbReference type="Gene3D" id="3.20.20.105">
    <property type="entry name" value="Queuine tRNA-ribosyltransferase-like"/>
    <property type="match status" value="1"/>
</dbReference>
<dbReference type="HAMAP" id="MF_00168">
    <property type="entry name" value="Q_tRNA_Tgt"/>
    <property type="match status" value="1"/>
</dbReference>
<dbReference type="InterPro" id="IPR050076">
    <property type="entry name" value="ArchSynthase1/Queuine_TRR"/>
</dbReference>
<dbReference type="InterPro" id="IPR004803">
    <property type="entry name" value="TGT"/>
</dbReference>
<dbReference type="InterPro" id="IPR036511">
    <property type="entry name" value="TGT-like_sf"/>
</dbReference>
<dbReference type="InterPro" id="IPR002616">
    <property type="entry name" value="tRNA_ribo_trans-like"/>
</dbReference>
<dbReference type="NCBIfam" id="TIGR00430">
    <property type="entry name" value="Q_tRNA_tgt"/>
    <property type="match status" value="1"/>
</dbReference>
<dbReference type="NCBIfam" id="TIGR00449">
    <property type="entry name" value="tgt_general"/>
    <property type="match status" value="1"/>
</dbReference>
<dbReference type="PANTHER" id="PTHR46499">
    <property type="entry name" value="QUEUINE TRNA-RIBOSYLTRANSFERASE"/>
    <property type="match status" value="1"/>
</dbReference>
<dbReference type="PANTHER" id="PTHR46499:SF1">
    <property type="entry name" value="QUEUINE TRNA-RIBOSYLTRANSFERASE"/>
    <property type="match status" value="1"/>
</dbReference>
<dbReference type="Pfam" id="PF01702">
    <property type="entry name" value="TGT"/>
    <property type="match status" value="1"/>
</dbReference>
<dbReference type="SUPFAM" id="SSF51713">
    <property type="entry name" value="tRNA-guanine transglycosylase"/>
    <property type="match status" value="1"/>
</dbReference>
<evidence type="ECO:0000255" key="1">
    <source>
        <dbReference type="HAMAP-Rule" id="MF_00168"/>
    </source>
</evidence>
<gene>
    <name evidence="1" type="primary">tgt</name>
    <name type="ordered locus">SE_1322</name>
</gene>
<feature type="chain" id="PRO_0000135528" description="Queuine tRNA-ribosyltransferase">
    <location>
        <begin position="1"/>
        <end position="379"/>
    </location>
</feature>
<feature type="region of interest" description="RNA binding" evidence="1">
    <location>
        <begin position="249"/>
        <end position="255"/>
    </location>
</feature>
<feature type="region of interest" description="RNA binding; important for wobble base 34 recognition" evidence="1">
    <location>
        <begin position="273"/>
        <end position="277"/>
    </location>
</feature>
<feature type="active site" description="Proton acceptor" evidence="1">
    <location>
        <position position="94"/>
    </location>
</feature>
<feature type="active site" description="Nucleophile" evidence="1">
    <location>
        <position position="268"/>
    </location>
</feature>
<feature type="binding site" evidence="1">
    <location>
        <begin position="94"/>
        <end position="98"/>
    </location>
    <ligand>
        <name>substrate</name>
    </ligand>
</feature>
<feature type="binding site" evidence="1">
    <location>
        <position position="148"/>
    </location>
    <ligand>
        <name>substrate</name>
    </ligand>
</feature>
<feature type="binding site" evidence="1">
    <location>
        <position position="191"/>
    </location>
    <ligand>
        <name>substrate</name>
    </ligand>
</feature>
<feature type="binding site" evidence="1">
    <location>
        <position position="218"/>
    </location>
    <ligand>
        <name>substrate</name>
    </ligand>
</feature>
<feature type="binding site" evidence="1">
    <location>
        <position position="306"/>
    </location>
    <ligand>
        <name>Zn(2+)</name>
        <dbReference type="ChEBI" id="CHEBI:29105"/>
    </ligand>
</feature>
<feature type="binding site" evidence="1">
    <location>
        <position position="308"/>
    </location>
    <ligand>
        <name>Zn(2+)</name>
        <dbReference type="ChEBI" id="CHEBI:29105"/>
    </ligand>
</feature>
<feature type="binding site" evidence="1">
    <location>
        <position position="311"/>
    </location>
    <ligand>
        <name>Zn(2+)</name>
        <dbReference type="ChEBI" id="CHEBI:29105"/>
    </ligand>
</feature>
<feature type="binding site" evidence="1">
    <location>
        <position position="337"/>
    </location>
    <ligand>
        <name>Zn(2+)</name>
        <dbReference type="ChEBI" id="CHEBI:29105"/>
    </ligand>
</feature>
<organism>
    <name type="scientific">Staphylococcus epidermidis (strain ATCC 12228 / FDA PCI 1200)</name>
    <dbReference type="NCBI Taxonomy" id="176280"/>
    <lineage>
        <taxon>Bacteria</taxon>
        <taxon>Bacillati</taxon>
        <taxon>Bacillota</taxon>
        <taxon>Bacilli</taxon>
        <taxon>Bacillales</taxon>
        <taxon>Staphylococcaceae</taxon>
        <taxon>Staphylococcus</taxon>
    </lineage>
</organism>
<proteinExistence type="inferred from homology"/>
<sequence>MPAVTYEHIKTCKQSGARLGIVHTPHGSFETPMFMPVGTKATVKTMSPEELRNIEAKIILGNTYHLWLQPGNDIIKHAGGLHKFMNWDGPILTDSGGFQVFSLSNLRKISEEGVEFRHHTNGSKLFLSPEKSMQIQNDLGSDIMMAFDECPPMPAEYDYVKDSIERTTRWAARCLKAHQRPGDQALFGIIQGGEYKDLREQSAKELVSLDFPGYAIGGLSVGEPKPVMYDMVEHTEQFMPKDKPRYLMGVGSPDALIECSIRGMDMFDCVLPTRIARNGTCMTSNGRLVVKNAKYADDLRPLDEQCDCYTCQHYTRAYIRHLVKAEETFGIRLTTIHNLHFLLKLMEDIRQAIREDRLLDFKDEFFEQYGLNVENPKNF</sequence>
<name>TGT_STAES</name>